<name>KPRS_AQUAE</name>
<reference key="1">
    <citation type="journal article" date="1998" name="Nature">
        <title>The complete genome of the hyperthermophilic bacterium Aquifex aeolicus.</title>
        <authorList>
            <person name="Deckert G."/>
            <person name="Warren P.V."/>
            <person name="Gaasterland T."/>
            <person name="Young W.G."/>
            <person name="Lenox A.L."/>
            <person name="Graham D.E."/>
            <person name="Overbeek R."/>
            <person name="Snead M.A."/>
            <person name="Keller M."/>
            <person name="Aujay M."/>
            <person name="Huber R."/>
            <person name="Feldman R.A."/>
            <person name="Short J.M."/>
            <person name="Olsen G.J."/>
            <person name="Swanson R.V."/>
        </authorList>
    </citation>
    <scope>NUCLEOTIDE SEQUENCE [LARGE SCALE GENOMIC DNA]</scope>
    <source>
        <strain>VF5</strain>
    </source>
</reference>
<gene>
    <name evidence="1" type="primary">prs</name>
    <name type="ordered locus">aq_1636</name>
</gene>
<accession>O67556</accession>
<comment type="function">
    <text evidence="1">Involved in the biosynthesis of the central metabolite phospho-alpha-D-ribosyl-1-pyrophosphate (PRPP) via the transfer of pyrophosphoryl group from ATP to 1-hydroxyl of ribose-5-phosphate (Rib-5-P).</text>
</comment>
<comment type="catalytic activity">
    <reaction evidence="1">
        <text>D-ribose 5-phosphate + ATP = 5-phospho-alpha-D-ribose 1-diphosphate + AMP + H(+)</text>
        <dbReference type="Rhea" id="RHEA:15609"/>
        <dbReference type="ChEBI" id="CHEBI:15378"/>
        <dbReference type="ChEBI" id="CHEBI:30616"/>
        <dbReference type="ChEBI" id="CHEBI:58017"/>
        <dbReference type="ChEBI" id="CHEBI:78346"/>
        <dbReference type="ChEBI" id="CHEBI:456215"/>
        <dbReference type="EC" id="2.7.6.1"/>
    </reaction>
</comment>
<comment type="cofactor">
    <cofactor evidence="1">
        <name>Mg(2+)</name>
        <dbReference type="ChEBI" id="CHEBI:18420"/>
    </cofactor>
    <text evidence="1">Binds 2 Mg(2+) ions per subunit.</text>
</comment>
<comment type="pathway">
    <text evidence="1">Metabolic intermediate biosynthesis; 5-phospho-alpha-D-ribose 1-diphosphate biosynthesis; 5-phospho-alpha-D-ribose 1-diphosphate from D-ribose 5-phosphate (route I): step 1/1.</text>
</comment>
<comment type="subunit">
    <text evidence="1">Homohexamer.</text>
</comment>
<comment type="subcellular location">
    <subcellularLocation>
        <location evidence="1">Cytoplasm</location>
    </subcellularLocation>
</comment>
<comment type="similarity">
    <text evidence="1">Belongs to the ribose-phosphate pyrophosphokinase family. Class I subfamily.</text>
</comment>
<evidence type="ECO:0000255" key="1">
    <source>
        <dbReference type="HAMAP-Rule" id="MF_00583"/>
    </source>
</evidence>
<feature type="chain" id="PRO_0000141105" description="Ribose-phosphate pyrophosphokinase">
    <location>
        <begin position="1"/>
        <end position="311"/>
    </location>
</feature>
<feature type="active site" evidence="1">
    <location>
        <position position="193"/>
    </location>
</feature>
<feature type="binding site" evidence="1">
    <location>
        <begin position="37"/>
        <end position="39"/>
    </location>
    <ligand>
        <name>ATP</name>
        <dbReference type="ChEBI" id="CHEBI:30616"/>
    </ligand>
</feature>
<feature type="binding site" evidence="1">
    <location>
        <begin position="96"/>
        <end position="97"/>
    </location>
    <ligand>
        <name>ATP</name>
        <dbReference type="ChEBI" id="CHEBI:30616"/>
    </ligand>
</feature>
<feature type="binding site" evidence="1">
    <location>
        <position position="130"/>
    </location>
    <ligand>
        <name>Mg(2+)</name>
        <dbReference type="ChEBI" id="CHEBI:18420"/>
        <label>1</label>
    </ligand>
</feature>
<feature type="binding site" evidence="1">
    <location>
        <position position="170"/>
    </location>
    <ligand>
        <name>Mg(2+)</name>
        <dbReference type="ChEBI" id="CHEBI:18420"/>
        <label>2</label>
    </ligand>
</feature>
<feature type="binding site" evidence="1">
    <location>
        <position position="195"/>
    </location>
    <ligand>
        <name>D-ribose 5-phosphate</name>
        <dbReference type="ChEBI" id="CHEBI:78346"/>
    </ligand>
</feature>
<feature type="binding site" evidence="1">
    <location>
        <position position="219"/>
    </location>
    <ligand>
        <name>D-ribose 5-phosphate</name>
        <dbReference type="ChEBI" id="CHEBI:78346"/>
    </ligand>
</feature>
<feature type="binding site" evidence="1">
    <location>
        <begin position="223"/>
        <end position="227"/>
    </location>
    <ligand>
        <name>D-ribose 5-phosphate</name>
        <dbReference type="ChEBI" id="CHEBI:78346"/>
    </ligand>
</feature>
<keyword id="KW-0067">ATP-binding</keyword>
<keyword id="KW-0963">Cytoplasm</keyword>
<keyword id="KW-0418">Kinase</keyword>
<keyword id="KW-0460">Magnesium</keyword>
<keyword id="KW-0479">Metal-binding</keyword>
<keyword id="KW-0545">Nucleotide biosynthesis</keyword>
<keyword id="KW-0547">Nucleotide-binding</keyword>
<keyword id="KW-1185">Reference proteome</keyword>
<keyword id="KW-0808">Transferase</keyword>
<sequence>MNGVKIIAGTSNKTLSEEIAGYLGLRLTDALITTFSDGEIRVQINESIRGYHVYVITSLSNPVNHNLMELLLTLDAVKRSSPKEITAVVPYYAYGRQDRQDKPRTPISAKLVADLIQKAGANRVIVVDLHSPQIQGFFDIPVEHLTAIPVLYDYIRKNVVLENPIVVSPDAGGVKRARDLANKLGCGIGVILKRRPEPNKAEVMDVVGDIEGKEAIIVDDIIDTAGTLVAAANLLVNKGVKRVIACATHGIFSGPAVERLTNSPIEKVIVTNTLPVYEKKFGKLEVVSIAPLIGEAIRRIQEGTSVSSLFT</sequence>
<proteinExistence type="inferred from homology"/>
<organism>
    <name type="scientific">Aquifex aeolicus (strain VF5)</name>
    <dbReference type="NCBI Taxonomy" id="224324"/>
    <lineage>
        <taxon>Bacteria</taxon>
        <taxon>Pseudomonadati</taxon>
        <taxon>Aquificota</taxon>
        <taxon>Aquificia</taxon>
        <taxon>Aquificales</taxon>
        <taxon>Aquificaceae</taxon>
        <taxon>Aquifex</taxon>
    </lineage>
</organism>
<dbReference type="EC" id="2.7.6.1" evidence="1"/>
<dbReference type="EMBL" id="AE000657">
    <property type="protein sequence ID" value="AAC07513.1"/>
    <property type="molecule type" value="Genomic_DNA"/>
</dbReference>
<dbReference type="PIR" id="B70441">
    <property type="entry name" value="B70441"/>
</dbReference>
<dbReference type="RefSeq" id="NP_214121.1">
    <property type="nucleotide sequence ID" value="NC_000918.1"/>
</dbReference>
<dbReference type="RefSeq" id="WP_010881059.1">
    <property type="nucleotide sequence ID" value="NC_000918.1"/>
</dbReference>
<dbReference type="SMR" id="O67556"/>
<dbReference type="FunCoup" id="O67556">
    <property type="interactions" value="482"/>
</dbReference>
<dbReference type="STRING" id="224324.aq_1636"/>
<dbReference type="EnsemblBacteria" id="AAC07513">
    <property type="protein sequence ID" value="AAC07513"/>
    <property type="gene ID" value="aq_1636"/>
</dbReference>
<dbReference type="KEGG" id="aae:aq_1636"/>
<dbReference type="PATRIC" id="fig|224324.8.peg.1261"/>
<dbReference type="eggNOG" id="COG0462">
    <property type="taxonomic scope" value="Bacteria"/>
</dbReference>
<dbReference type="HOGENOM" id="CLU_033546_4_0_0"/>
<dbReference type="InParanoid" id="O67556"/>
<dbReference type="OrthoDB" id="9777067at2"/>
<dbReference type="UniPathway" id="UPA00087">
    <property type="reaction ID" value="UER00172"/>
</dbReference>
<dbReference type="Proteomes" id="UP000000798">
    <property type="component" value="Chromosome"/>
</dbReference>
<dbReference type="GO" id="GO:0005737">
    <property type="term" value="C:cytoplasm"/>
    <property type="evidence" value="ECO:0000318"/>
    <property type="project" value="GO_Central"/>
</dbReference>
<dbReference type="GO" id="GO:0002189">
    <property type="term" value="C:ribose phosphate diphosphokinase complex"/>
    <property type="evidence" value="ECO:0000318"/>
    <property type="project" value="GO_Central"/>
</dbReference>
<dbReference type="GO" id="GO:0005524">
    <property type="term" value="F:ATP binding"/>
    <property type="evidence" value="ECO:0007669"/>
    <property type="project" value="UniProtKB-KW"/>
</dbReference>
<dbReference type="GO" id="GO:0016301">
    <property type="term" value="F:kinase activity"/>
    <property type="evidence" value="ECO:0007669"/>
    <property type="project" value="UniProtKB-KW"/>
</dbReference>
<dbReference type="GO" id="GO:0000287">
    <property type="term" value="F:magnesium ion binding"/>
    <property type="evidence" value="ECO:0007669"/>
    <property type="project" value="UniProtKB-UniRule"/>
</dbReference>
<dbReference type="GO" id="GO:0004749">
    <property type="term" value="F:ribose phosphate diphosphokinase activity"/>
    <property type="evidence" value="ECO:0000318"/>
    <property type="project" value="GO_Central"/>
</dbReference>
<dbReference type="GO" id="GO:0006015">
    <property type="term" value="P:5-phosphoribose 1-diphosphate biosynthetic process"/>
    <property type="evidence" value="ECO:0000318"/>
    <property type="project" value="GO_Central"/>
</dbReference>
<dbReference type="GO" id="GO:0006164">
    <property type="term" value="P:purine nucleotide biosynthetic process"/>
    <property type="evidence" value="ECO:0000318"/>
    <property type="project" value="GO_Central"/>
</dbReference>
<dbReference type="CDD" id="cd06223">
    <property type="entry name" value="PRTases_typeI"/>
    <property type="match status" value="1"/>
</dbReference>
<dbReference type="FunFam" id="3.40.50.2020:FF:000007">
    <property type="entry name" value="Ribose-phosphate pyrophosphokinase"/>
    <property type="match status" value="1"/>
</dbReference>
<dbReference type="Gene3D" id="3.40.50.2020">
    <property type="match status" value="2"/>
</dbReference>
<dbReference type="HAMAP" id="MF_00583_B">
    <property type="entry name" value="RibP_PPkinase_B"/>
    <property type="match status" value="1"/>
</dbReference>
<dbReference type="InterPro" id="IPR029099">
    <property type="entry name" value="Pribosyltran_N"/>
</dbReference>
<dbReference type="InterPro" id="IPR000836">
    <property type="entry name" value="PRibTrfase_dom"/>
</dbReference>
<dbReference type="InterPro" id="IPR029057">
    <property type="entry name" value="PRTase-like"/>
</dbReference>
<dbReference type="InterPro" id="IPR005946">
    <property type="entry name" value="Rib-P_diPkinase"/>
</dbReference>
<dbReference type="InterPro" id="IPR037515">
    <property type="entry name" value="Rib-P_diPkinase_bac"/>
</dbReference>
<dbReference type="NCBIfam" id="NF002320">
    <property type="entry name" value="PRK01259.1"/>
    <property type="match status" value="1"/>
</dbReference>
<dbReference type="NCBIfam" id="TIGR01251">
    <property type="entry name" value="ribP_PPkin"/>
    <property type="match status" value="1"/>
</dbReference>
<dbReference type="PANTHER" id="PTHR10210">
    <property type="entry name" value="RIBOSE-PHOSPHATE DIPHOSPHOKINASE FAMILY MEMBER"/>
    <property type="match status" value="1"/>
</dbReference>
<dbReference type="PANTHER" id="PTHR10210:SF41">
    <property type="entry name" value="RIBOSE-PHOSPHATE PYROPHOSPHOKINASE 1, CHLOROPLASTIC"/>
    <property type="match status" value="1"/>
</dbReference>
<dbReference type="Pfam" id="PF14572">
    <property type="entry name" value="Pribosyl_synth"/>
    <property type="match status" value="1"/>
</dbReference>
<dbReference type="Pfam" id="PF13793">
    <property type="entry name" value="Pribosyltran_N"/>
    <property type="match status" value="1"/>
</dbReference>
<dbReference type="SMART" id="SM01400">
    <property type="entry name" value="Pribosyltran_N"/>
    <property type="match status" value="1"/>
</dbReference>
<dbReference type="SUPFAM" id="SSF53271">
    <property type="entry name" value="PRTase-like"/>
    <property type="match status" value="1"/>
</dbReference>
<protein>
    <recommendedName>
        <fullName evidence="1">Ribose-phosphate pyrophosphokinase</fullName>
        <shortName evidence="1">RPPK</shortName>
        <ecNumber evidence="1">2.7.6.1</ecNumber>
    </recommendedName>
    <alternativeName>
        <fullName evidence="1">5-phospho-D-ribosyl alpha-1-diphosphate synthase</fullName>
    </alternativeName>
    <alternativeName>
        <fullName evidence="1">Phosphoribosyl diphosphate synthase</fullName>
    </alternativeName>
    <alternativeName>
        <fullName evidence="1">Phosphoribosyl pyrophosphate synthase</fullName>
        <shortName evidence="1">P-Rib-PP synthase</shortName>
        <shortName evidence="1">PRPP synthase</shortName>
        <shortName evidence="1">PRPPase</shortName>
    </alternativeName>
</protein>